<evidence type="ECO:0000269" key="1">
    <source>
    </source>
</evidence>
<evidence type="ECO:0000269" key="2">
    <source>
    </source>
</evidence>
<evidence type="ECO:0000269" key="3">
    <source>
    </source>
</evidence>
<evidence type="ECO:0000269" key="4">
    <source>
    </source>
</evidence>
<evidence type="ECO:0000305" key="5"/>
<sequence>MNQSHKPPSIVVGIDGSKPAVQAALWAVDEAASRDIPLRLLYAIEPDDPGYAAHGAAARKLAAAENAVRYAFTAVEAADRPVKVEVEITQERPVTSLIRASAAAALVCVGAIGVHHFRPERVGSTAAALALSAQCPVAIVRPHRVPIGRDAAWIVVEADGSSDIGVLLGAVMAEARLRDSPVRVVTCRQSGVGDTGDDVRASLDRWLARWQPRYPDVRVQSAAVHGELLDYLAGLGRSVHMVVLSASDQEHVEQLVGAPGNAVLQEAGCTLLVVGQQYL</sequence>
<name>Y2028_MYCTU</name>
<organism>
    <name type="scientific">Mycobacterium tuberculosis (strain ATCC 25618 / H37Rv)</name>
    <dbReference type="NCBI Taxonomy" id="83332"/>
    <lineage>
        <taxon>Bacteria</taxon>
        <taxon>Bacillati</taxon>
        <taxon>Actinomycetota</taxon>
        <taxon>Actinomycetes</taxon>
        <taxon>Mycobacteriales</taxon>
        <taxon>Mycobacteriaceae</taxon>
        <taxon>Mycobacterium</taxon>
        <taxon>Mycobacterium tuberculosis complex</taxon>
    </lineage>
</organism>
<comment type="induction">
    <text evidence="1 2 3">A member of the dormancy regulon. Induced in response to reduced oxygen tension (hypoxia), low levels of nitric oxide (NO) and carbon monoxide (CO). It is hoped that this regulon will give insight into the latent, or dormant phase of infection.</text>
</comment>
<comment type="disruption phenotype">
    <text evidence="4">No visible phenotype under normal or hypoxic and normoxic stationary phase growth, nor in mouse- or human-derived macrophage cell lines.</text>
</comment>
<comment type="similarity">
    <text evidence="5">Belongs to the universal stress protein A family.</text>
</comment>
<protein>
    <recommendedName>
        <fullName>Universal stress protein Rv2028c</fullName>
        <shortName>USP Rv2028c</shortName>
    </recommendedName>
</protein>
<accession>P9WFD9</accession>
<accession>L0T9Z1</accession>
<accession>O53474</accession>
<accession>Q7D7L5</accession>
<feature type="chain" id="PRO_0000392627" description="Universal stress protein Rv2028c">
    <location>
        <begin position="1"/>
        <end position="279"/>
    </location>
</feature>
<proteinExistence type="evidence at protein level"/>
<reference key="1">
    <citation type="journal article" date="1998" name="Nature">
        <title>Deciphering the biology of Mycobacterium tuberculosis from the complete genome sequence.</title>
        <authorList>
            <person name="Cole S.T."/>
            <person name="Brosch R."/>
            <person name="Parkhill J."/>
            <person name="Garnier T."/>
            <person name="Churcher C.M."/>
            <person name="Harris D.E."/>
            <person name="Gordon S.V."/>
            <person name="Eiglmeier K."/>
            <person name="Gas S."/>
            <person name="Barry C.E. III"/>
            <person name="Tekaia F."/>
            <person name="Badcock K."/>
            <person name="Basham D."/>
            <person name="Brown D."/>
            <person name="Chillingworth T."/>
            <person name="Connor R."/>
            <person name="Davies R.M."/>
            <person name="Devlin K."/>
            <person name="Feltwell T."/>
            <person name="Gentles S."/>
            <person name="Hamlin N."/>
            <person name="Holroyd S."/>
            <person name="Hornsby T."/>
            <person name="Jagels K."/>
            <person name="Krogh A."/>
            <person name="McLean J."/>
            <person name="Moule S."/>
            <person name="Murphy L.D."/>
            <person name="Oliver S."/>
            <person name="Osborne J."/>
            <person name="Quail M.A."/>
            <person name="Rajandream M.A."/>
            <person name="Rogers J."/>
            <person name="Rutter S."/>
            <person name="Seeger K."/>
            <person name="Skelton S."/>
            <person name="Squares S."/>
            <person name="Squares R."/>
            <person name="Sulston J.E."/>
            <person name="Taylor K."/>
            <person name="Whitehead S."/>
            <person name="Barrell B.G."/>
        </authorList>
    </citation>
    <scope>NUCLEOTIDE SEQUENCE [LARGE SCALE GENOMIC DNA]</scope>
    <source>
        <strain>ATCC 25618 / H37Rv</strain>
    </source>
</reference>
<reference key="2">
    <citation type="journal article" date="2001" name="Proc. Natl. Acad. Sci. U.S.A.">
        <title>Regulation of the Mycobacterium tuberculosis hypoxic response gene encoding alpha -crystallin.</title>
        <authorList>
            <person name="Sherman D.R."/>
            <person name="Voskuil M."/>
            <person name="Schnappinger D."/>
            <person name="Liao R."/>
            <person name="Harrell M.I."/>
            <person name="Schoolnik G.K."/>
        </authorList>
    </citation>
    <scope>INDUCTION BY HYPOXIA</scope>
    <source>
        <strain>ATCC 25618 / H37Rv</strain>
    </source>
</reference>
<reference key="3">
    <citation type="journal article" date="2003" name="J. Exp. Med.">
        <title>Inhibition of respiration by nitric oxide induces a Mycobacterium tuberculosis dormancy program.</title>
        <authorList>
            <person name="Voskuil M.I."/>
            <person name="Schnappinger D."/>
            <person name="Visconti K.C."/>
            <person name="Harrell M.I."/>
            <person name="Dolganov G.M."/>
            <person name="Sherman D.R."/>
            <person name="Schoolnik G.K."/>
        </authorList>
    </citation>
    <scope>INDUCTION BY NITRIC OXIDE (NO) AND BY HYPOXIA</scope>
    <scope>DORMANCY REGULON</scope>
    <source>
        <strain>ATCC 25618 / H37Rv</strain>
    </source>
</reference>
<reference key="4">
    <citation type="journal article" date="2008" name="J. Biol. Chem.">
        <title>Heme oxygenase-1-derived carbon monoxide induces the Mycobacterium tuberculosis dormancy regulon.</title>
        <authorList>
            <person name="Kumar A."/>
            <person name="Deshane J.S."/>
            <person name="Crossman D.K."/>
            <person name="Bolisetty S."/>
            <person name="Yan B.S."/>
            <person name="Kramnik I."/>
            <person name="Agarwal A."/>
            <person name="Steyn A.J."/>
        </authorList>
    </citation>
    <scope>INDUCTION BY CARBON MONOXIDE (CO)</scope>
    <scope>DORMANCY REGULON</scope>
    <source>
        <strain>ATCC 25618 / H37Rv</strain>
    </source>
</reference>
<reference key="5">
    <citation type="journal article" date="2010" name="Tuberculosis">
        <title>Individual Mycobacterium tuberculosis universal stress protein homologues are dispensable in vitro.</title>
        <authorList>
            <person name="Hingley-Wilson S.M."/>
            <person name="Lougheed K.E."/>
            <person name="Ferguson K."/>
            <person name="Leiva S."/>
            <person name="Williams H.D."/>
        </authorList>
    </citation>
    <scope>DISRUPTION PHENOTYPE</scope>
    <source>
        <strain>ATCC 25618 / H37Rv</strain>
    </source>
</reference>
<reference key="6">
    <citation type="journal article" date="2011" name="Mol. Cell. Proteomics">
        <title>Proteogenomic analysis of Mycobacterium tuberculosis by high resolution mass spectrometry.</title>
        <authorList>
            <person name="Kelkar D.S."/>
            <person name="Kumar D."/>
            <person name="Kumar P."/>
            <person name="Balakrishnan L."/>
            <person name="Muthusamy B."/>
            <person name="Yadav A.K."/>
            <person name="Shrivastava P."/>
            <person name="Marimuthu A."/>
            <person name="Anand S."/>
            <person name="Sundaram H."/>
            <person name="Kingsbury R."/>
            <person name="Harsha H.C."/>
            <person name="Nair B."/>
            <person name="Prasad T.S."/>
            <person name="Chauhan D.S."/>
            <person name="Katoch K."/>
            <person name="Katoch V.M."/>
            <person name="Kumar P."/>
            <person name="Chaerkady R."/>
            <person name="Ramachandran S."/>
            <person name="Dash D."/>
            <person name="Pandey A."/>
        </authorList>
    </citation>
    <scope>IDENTIFICATION BY MASS SPECTROMETRY [LARGE SCALE ANALYSIS]</scope>
    <source>
        <strain>ATCC 25618 / H37Rv</strain>
    </source>
</reference>
<keyword id="KW-1185">Reference proteome</keyword>
<gene>
    <name type="ordered locus">Rv2028c</name>
</gene>
<dbReference type="EMBL" id="AL123456">
    <property type="protein sequence ID" value="CCP44801.1"/>
    <property type="molecule type" value="Genomic_DNA"/>
</dbReference>
<dbReference type="PIR" id="C70942">
    <property type="entry name" value="C70942"/>
</dbReference>
<dbReference type="RefSeq" id="NP_216544.1">
    <property type="nucleotide sequence ID" value="NC_000962.3"/>
</dbReference>
<dbReference type="RefSeq" id="WP_003410171.1">
    <property type="nucleotide sequence ID" value="NZ_NVQJ01000046.1"/>
</dbReference>
<dbReference type="SMR" id="P9WFD9"/>
<dbReference type="FunCoup" id="P9WFD9">
    <property type="interactions" value="1"/>
</dbReference>
<dbReference type="STRING" id="83332.Rv2028c"/>
<dbReference type="PaxDb" id="83332-Rv2028c"/>
<dbReference type="DNASU" id="888494"/>
<dbReference type="GeneID" id="888494"/>
<dbReference type="KEGG" id="mtu:Rv2028c"/>
<dbReference type="KEGG" id="mtv:RVBD_2028c"/>
<dbReference type="TubercuList" id="Rv2028c"/>
<dbReference type="eggNOG" id="COG0589">
    <property type="taxonomic scope" value="Bacteria"/>
</dbReference>
<dbReference type="InParanoid" id="P9WFD9"/>
<dbReference type="OrthoDB" id="3174546at2"/>
<dbReference type="PhylomeDB" id="P9WFD9"/>
<dbReference type="Proteomes" id="UP000001584">
    <property type="component" value="Chromosome"/>
</dbReference>
<dbReference type="GO" id="GO:0009274">
    <property type="term" value="C:peptidoglycan-based cell wall"/>
    <property type="evidence" value="ECO:0007005"/>
    <property type="project" value="MTBBASE"/>
</dbReference>
<dbReference type="GO" id="GO:0005886">
    <property type="term" value="C:plasma membrane"/>
    <property type="evidence" value="ECO:0007005"/>
    <property type="project" value="MTBBASE"/>
</dbReference>
<dbReference type="GO" id="GO:0006950">
    <property type="term" value="P:response to stress"/>
    <property type="evidence" value="ECO:0000318"/>
    <property type="project" value="GO_Central"/>
</dbReference>
<dbReference type="Gene3D" id="3.40.50.620">
    <property type="entry name" value="HUPs"/>
    <property type="match status" value="2"/>
</dbReference>
<dbReference type="InterPro" id="IPR014729">
    <property type="entry name" value="Rossmann-like_a/b/a_fold"/>
</dbReference>
<dbReference type="InterPro" id="IPR006015">
    <property type="entry name" value="Universal_stress_UspA"/>
</dbReference>
<dbReference type="InterPro" id="IPR006016">
    <property type="entry name" value="UspA"/>
</dbReference>
<dbReference type="PANTHER" id="PTHR46268">
    <property type="entry name" value="STRESS RESPONSE PROTEIN NHAX"/>
    <property type="match status" value="1"/>
</dbReference>
<dbReference type="PANTHER" id="PTHR46268:SF6">
    <property type="entry name" value="UNIVERSAL STRESS PROTEIN UP12"/>
    <property type="match status" value="1"/>
</dbReference>
<dbReference type="Pfam" id="PF00582">
    <property type="entry name" value="Usp"/>
    <property type="match status" value="1"/>
</dbReference>
<dbReference type="PRINTS" id="PR01438">
    <property type="entry name" value="UNVRSLSTRESS"/>
</dbReference>
<dbReference type="SUPFAM" id="SSF52402">
    <property type="entry name" value="Adenine nucleotide alpha hydrolases-like"/>
    <property type="match status" value="2"/>
</dbReference>